<keyword id="KW-1064">Adaptive immunity</keyword>
<keyword id="KW-1003">Cell membrane</keyword>
<keyword id="KW-1015">Disulfide bond</keyword>
<keyword id="KW-0391">Immunity</keyword>
<keyword id="KW-1280">Immunoglobulin</keyword>
<keyword id="KW-0393">Immunoglobulin domain</keyword>
<keyword id="KW-0472">Membrane</keyword>
<keyword id="KW-1267">Proteomics identification</keyword>
<keyword id="KW-1185">Reference proteome</keyword>
<keyword id="KW-0964">Secreted</keyword>
<feature type="chain" id="PRO_0000393469" description="Immunoglobulin lambda constant 6">
    <location>
        <begin position="1" status="less than"/>
        <end position="106"/>
    </location>
</feature>
<feature type="domain" description="Ig-like" evidence="1">
    <location>
        <begin position="7"/>
        <end position="101"/>
    </location>
</feature>
<feature type="disulfide bond" evidence="1">
    <location>
        <begin position="28"/>
        <end position="87"/>
    </location>
</feature>
<feature type="disulfide bond" description="Interchain (with heavy chain)">
    <location>
        <position position="105"/>
    </location>
</feature>
<feature type="non-terminal residue">
    <location>
        <position position="1"/>
    </location>
</feature>
<reference key="1">
    <citation type="journal article" date="1981" name="Nature">
        <title>Clustered arrangement of immunoglobulin lambda constant region genes in man.</title>
        <authorList>
            <person name="Hieter P.A."/>
            <person name="Hollis G.F."/>
            <person name="Korsmeyer S.J."/>
            <person name="Waldmann T.A."/>
            <person name="Leder P."/>
        </authorList>
    </citation>
    <scope>NUCLEOTIDE SEQUENCE [GENOMIC DNA] (IMGT ALLELE IGLC6*01)</scope>
    <source>
        <tissue>Fetal liver</tissue>
    </source>
</reference>
<reference key="2">
    <citation type="journal article" date="1987" name="Proc. Natl. Acad. Sci. U.S.A.">
        <title>Human immunoglobulin C lambda 6 gene encodes the Kern+Oz-lambda chain and C lambda 4 and C lambda 5 are pseudogenes.</title>
        <authorList>
            <person name="Dariavach P."/>
            <person name="Lefranc G."/>
            <person name="Lefranc M.P."/>
        </authorList>
    </citation>
    <scope>NUCLEOTIDE SEQUENCE [GENOMIC DNA] (IMGT ALLELE IGLC6*01)</scope>
    <scope>POLYMORPHISM</scope>
    <scope>SEROLOGICAL ISOTYPE</scope>
</reference>
<reference key="3">
    <citation type="journal article" date="1999" name="Nature">
        <title>The DNA sequence of human chromosome 22.</title>
        <authorList>
            <person name="Dunham I."/>
            <person name="Hunt A.R."/>
            <person name="Collins J.E."/>
            <person name="Bruskiewich R."/>
            <person name="Beare D.M."/>
            <person name="Clamp M."/>
            <person name="Smink L.J."/>
            <person name="Ainscough R."/>
            <person name="Almeida J.P."/>
            <person name="Babbage A.K."/>
            <person name="Bagguley C."/>
            <person name="Bailey J."/>
            <person name="Barlow K.F."/>
            <person name="Bates K.N."/>
            <person name="Beasley O.P."/>
            <person name="Bird C.P."/>
            <person name="Blakey S.E."/>
            <person name="Bridgeman A.M."/>
            <person name="Buck D."/>
            <person name="Burgess J."/>
            <person name="Burrill W.D."/>
            <person name="Burton J."/>
            <person name="Carder C."/>
            <person name="Carter N.P."/>
            <person name="Chen Y."/>
            <person name="Clark G."/>
            <person name="Clegg S.M."/>
            <person name="Cobley V.E."/>
            <person name="Cole C.G."/>
            <person name="Collier R.E."/>
            <person name="Connor R."/>
            <person name="Conroy D."/>
            <person name="Corby N.R."/>
            <person name="Coville G.J."/>
            <person name="Cox A.V."/>
            <person name="Davis J."/>
            <person name="Dawson E."/>
            <person name="Dhami P.D."/>
            <person name="Dockree C."/>
            <person name="Dodsworth S.J."/>
            <person name="Durbin R.M."/>
            <person name="Ellington A.G."/>
            <person name="Evans K.L."/>
            <person name="Fey J.M."/>
            <person name="Fleming K."/>
            <person name="French L."/>
            <person name="Garner A.A."/>
            <person name="Gilbert J.G.R."/>
            <person name="Goward M.E."/>
            <person name="Grafham D.V."/>
            <person name="Griffiths M.N.D."/>
            <person name="Hall C."/>
            <person name="Hall R.E."/>
            <person name="Hall-Tamlyn G."/>
            <person name="Heathcott R.W."/>
            <person name="Ho S."/>
            <person name="Holmes S."/>
            <person name="Hunt S.E."/>
            <person name="Jones M.C."/>
            <person name="Kershaw J."/>
            <person name="Kimberley A.M."/>
            <person name="King A."/>
            <person name="Laird G.K."/>
            <person name="Langford C.F."/>
            <person name="Leversha M.A."/>
            <person name="Lloyd C."/>
            <person name="Lloyd D.M."/>
            <person name="Martyn I.D."/>
            <person name="Mashreghi-Mohammadi M."/>
            <person name="Matthews L.H."/>
            <person name="Mccann O.T."/>
            <person name="Mcclay J."/>
            <person name="Mclaren S."/>
            <person name="McMurray A.A."/>
            <person name="Milne S.A."/>
            <person name="Mortimore B.J."/>
            <person name="Odell C.N."/>
            <person name="Pavitt R."/>
            <person name="Pearce A.V."/>
            <person name="Pearson D."/>
            <person name="Phillimore B.J.C.T."/>
            <person name="Phillips S.H."/>
            <person name="Plumb R.W."/>
            <person name="Ramsay H."/>
            <person name="Ramsey Y."/>
            <person name="Rogers L."/>
            <person name="Ross M.T."/>
            <person name="Scott C.E."/>
            <person name="Sehra H.K."/>
            <person name="Skuce C.D."/>
            <person name="Smalley S."/>
            <person name="Smith M.L."/>
            <person name="Soderlund C."/>
            <person name="Spragon L."/>
            <person name="Steward C.A."/>
            <person name="Sulston J.E."/>
            <person name="Swann R.M."/>
            <person name="Vaudin M."/>
            <person name="Wall M."/>
            <person name="Wallis J.M."/>
            <person name="Whiteley M.N."/>
            <person name="Willey D.L."/>
            <person name="Williams L."/>
            <person name="Williams S.A."/>
            <person name="Williamson H."/>
            <person name="Wilmer T.E."/>
            <person name="Wilming L."/>
            <person name="Wright C.L."/>
            <person name="Hubbard T."/>
            <person name="Bentley D.R."/>
            <person name="Beck S."/>
            <person name="Rogers J."/>
            <person name="Shimizu N."/>
            <person name="Minoshima S."/>
            <person name="Kawasaki K."/>
            <person name="Sasaki T."/>
            <person name="Asakawa S."/>
            <person name="Kudoh J."/>
            <person name="Shintani A."/>
            <person name="Shibuya K."/>
            <person name="Yoshizaki Y."/>
            <person name="Aoki N."/>
            <person name="Mitsuyama S."/>
            <person name="Roe B.A."/>
            <person name="Chen F."/>
            <person name="Chu L."/>
            <person name="Crabtree J."/>
            <person name="Deschamps S."/>
            <person name="Do A."/>
            <person name="Do T."/>
            <person name="Dorman A."/>
            <person name="Fang F."/>
            <person name="Fu Y."/>
            <person name="Hu P."/>
            <person name="Hua A."/>
            <person name="Kenton S."/>
            <person name="Lai H."/>
            <person name="Lao H.I."/>
            <person name="Lewis J."/>
            <person name="Lewis S."/>
            <person name="Lin S.-P."/>
            <person name="Loh P."/>
            <person name="Malaj E."/>
            <person name="Nguyen T."/>
            <person name="Pan H."/>
            <person name="Phan S."/>
            <person name="Qi S."/>
            <person name="Qian Y."/>
            <person name="Ray L."/>
            <person name="Ren Q."/>
            <person name="Shaull S."/>
            <person name="Sloan D."/>
            <person name="Song L."/>
            <person name="Wang Q."/>
            <person name="Wang Y."/>
            <person name="Wang Z."/>
            <person name="White J."/>
            <person name="Willingham D."/>
            <person name="Wu H."/>
            <person name="Yao Z."/>
            <person name="Zhan M."/>
            <person name="Zhang G."/>
            <person name="Chissoe S."/>
            <person name="Murray J."/>
            <person name="Miller N."/>
            <person name="Minx P."/>
            <person name="Fulton R."/>
            <person name="Johnson D."/>
            <person name="Bemis G."/>
            <person name="Bentley D."/>
            <person name="Bradshaw H."/>
            <person name="Bourne S."/>
            <person name="Cordes M."/>
            <person name="Du Z."/>
            <person name="Fulton L."/>
            <person name="Goela D."/>
            <person name="Graves T."/>
            <person name="Hawkins J."/>
            <person name="Hinds K."/>
            <person name="Kemp K."/>
            <person name="Latreille P."/>
            <person name="Layman D."/>
            <person name="Ozersky P."/>
            <person name="Rohlfing T."/>
            <person name="Scheet P."/>
            <person name="Walker C."/>
            <person name="Wamsley A."/>
            <person name="Wohldmann P."/>
            <person name="Pepin K."/>
            <person name="Nelson J."/>
            <person name="Korf I."/>
            <person name="Bedell J.A."/>
            <person name="Hillier L.W."/>
            <person name="Mardis E."/>
            <person name="Waterston R."/>
            <person name="Wilson R."/>
            <person name="Emanuel B.S."/>
            <person name="Shaikh T."/>
            <person name="Kurahashi H."/>
            <person name="Saitta S."/>
            <person name="Budarf M.L."/>
            <person name="McDermid H.E."/>
            <person name="Johnson A."/>
            <person name="Wong A.C.C."/>
            <person name="Morrow B.E."/>
            <person name="Edelmann L."/>
            <person name="Kim U.J."/>
            <person name="Shizuya H."/>
            <person name="Simon M.I."/>
            <person name="Dumanski J.P."/>
            <person name="Peyrard M."/>
            <person name="Kedra D."/>
            <person name="Seroussi E."/>
            <person name="Fransson I."/>
            <person name="Tapia I."/>
            <person name="Bruder C.E."/>
            <person name="O'Brien K.P."/>
            <person name="Wilkinson P."/>
            <person name="Bodenteich A."/>
            <person name="Hartman K."/>
            <person name="Hu X."/>
            <person name="Khan A.S."/>
            <person name="Lane L."/>
            <person name="Tilahun Y."/>
            <person name="Wright H."/>
        </authorList>
    </citation>
    <scope>NUCLEOTIDE SEQUENCE [LARGE SCALE GENOMIC DNA]</scope>
</reference>
<reference key="4">
    <citation type="journal article" date="2001" name="Exp. Clin. Immunogenet.">
        <title>Nomenclature of the human immunoglobulin lambda (IGL) genes.</title>
        <authorList>
            <person name="Lefranc M.P."/>
        </authorList>
    </citation>
    <scope>NOMENCLATURE</scope>
</reference>
<reference key="5">
    <citation type="book" date="2001" name="The Immunoglobulin FactsBook.">
        <title>The Immunoglobulin FactsBook.</title>
        <editorList>
            <person name="Lefranc M.P."/>
            <person name="Lefranc G."/>
        </editorList>
        <authorList>
            <person name="Lefranc M.P."/>
            <person name="Lefranc G."/>
        </authorList>
    </citation>
    <scope>NOMENCLATURE</scope>
</reference>
<reference key="6">
    <citation type="journal article" date="2007" name="Annu. Rev. Genet.">
        <title>Immunoglobulin somatic hypermutation.</title>
        <authorList>
            <person name="Teng G."/>
            <person name="Papavasiliou F.N."/>
        </authorList>
    </citation>
    <scope>REVIEW ON SOMATIC HYPERMUTATION</scope>
</reference>
<reference key="7">
    <citation type="journal article" date="2010" name="J. Allergy Clin. Immunol.">
        <title>Structure and function of immunoglobulins.</title>
        <authorList>
            <person name="Schroeder H.W. Jr."/>
            <person name="Cavacini L."/>
        </authorList>
    </citation>
    <scope>REVIEW ON IMMUNOGLOBULINS</scope>
</reference>
<reference key="8">
    <citation type="journal article" date="2012" name="Nat. Rev. Immunol.">
        <title>Molecular programming of B cell memory.</title>
        <authorList>
            <person name="McHeyzer-Williams M."/>
            <person name="Okitsu S."/>
            <person name="Wang N."/>
            <person name="McHeyzer-Williams L."/>
        </authorList>
    </citation>
    <scope>REVIEW ON FUNCTION</scope>
</reference>
<dbReference type="EMBL" id="J03011">
    <property type="protein sequence ID" value="AAA59111.1"/>
    <property type="molecule type" value="Genomic_DNA"/>
</dbReference>
<dbReference type="EMBL" id="AC245028">
    <property type="status" value="NOT_ANNOTATED_CDS"/>
    <property type="molecule type" value="Genomic_DNA"/>
</dbReference>
<dbReference type="SMR" id="P0CF74"/>
<dbReference type="ComplexPortal" id="CPX-6909">
    <property type="entry name" value="IgD - Ig lambda 6 immunoglobulin complex, constant regions"/>
</dbReference>
<dbReference type="ComplexPortal" id="CPX-6926">
    <property type="entry name" value="IgM - Ig lambda 6 immunoglobulin complex, constant regions"/>
</dbReference>
<dbReference type="ComplexPortal" id="CPX-6934">
    <property type="entry name" value="IgG1 - Ig lambda 6 immunoglobulin complex, constant regions"/>
</dbReference>
<dbReference type="ComplexPortal" id="CPX-6941">
    <property type="entry name" value="IgG2 - Ig lambda 6 immunoglobulin complex, constant regions"/>
</dbReference>
<dbReference type="ComplexPortal" id="CPX-6947">
    <property type="entry name" value="IgG3 - Ig lambda 6 immunoglobulin complex, constant regions"/>
</dbReference>
<dbReference type="ComplexPortal" id="CPX-6953">
    <property type="entry name" value="IgG4 - Ig lambda 6 immunoglobulin complex, constant regions"/>
</dbReference>
<dbReference type="ComplexPortal" id="CPX-6960">
    <property type="entry name" value="IgA1 - Ig lambda 6 immunoglobulin complex, constant regions"/>
</dbReference>
<dbReference type="ComplexPortal" id="CPX-6966">
    <property type="entry name" value="IgA2 - Ig lambda 6 immunoglobulin complex, constant regions"/>
</dbReference>
<dbReference type="ComplexPortal" id="CPX-6973">
    <property type="entry name" value="IgE - Ig lambda 6 immunoglobulin complex, constant regions"/>
</dbReference>
<dbReference type="FunCoup" id="P0CF74">
    <property type="interactions" value="117"/>
</dbReference>
<dbReference type="IntAct" id="P0CF74">
    <property type="interactions" value="11"/>
</dbReference>
<dbReference type="IMGT_GENE-DB" id="IGLC6"/>
<dbReference type="BioMuta" id="HGNC:5860"/>
<dbReference type="DMDM" id="294956573"/>
<dbReference type="jPOST" id="P0CF74"/>
<dbReference type="MassIVE" id="P0CF74"/>
<dbReference type="ProteomicsDB" id="52443"/>
<dbReference type="Pumba" id="P0CF74"/>
<dbReference type="AGR" id="HGNC:5860"/>
<dbReference type="GeneCards" id="IGLC6"/>
<dbReference type="HGNC" id="HGNC:5860">
    <property type="gene designation" value="IGLC6"/>
</dbReference>
<dbReference type="neXtProt" id="NX_P0CF74"/>
<dbReference type="InParanoid" id="P0CF74"/>
<dbReference type="PAN-GO" id="P0CF74">
    <property type="GO annotations" value="11 GO annotations based on evolutionary models"/>
</dbReference>
<dbReference type="PhylomeDB" id="P0CF74"/>
<dbReference type="PathwayCommons" id="P0CF74"/>
<dbReference type="Reactome" id="R-HSA-166663">
    <property type="pathway name" value="Initial triggering of complement"/>
</dbReference>
<dbReference type="Reactome" id="R-HSA-173623">
    <property type="pathway name" value="Classical antibody-mediated complement activation"/>
</dbReference>
<dbReference type="Reactome" id="R-HSA-198933">
    <property type="pathway name" value="Immunoregulatory interactions between a Lymphoid and a non-Lymphoid cell"/>
</dbReference>
<dbReference type="Reactome" id="R-HSA-202733">
    <property type="pathway name" value="Cell surface interactions at the vascular wall"/>
</dbReference>
<dbReference type="Reactome" id="R-HSA-2029481">
    <property type="pathway name" value="FCGR activation"/>
</dbReference>
<dbReference type="Reactome" id="R-HSA-2029482">
    <property type="pathway name" value="Regulation of actin dynamics for phagocytic cup formation"/>
</dbReference>
<dbReference type="Reactome" id="R-HSA-2029485">
    <property type="pathway name" value="Role of phospholipids in phagocytosis"/>
</dbReference>
<dbReference type="Reactome" id="R-HSA-2168880">
    <property type="pathway name" value="Scavenging of heme from plasma"/>
</dbReference>
<dbReference type="Reactome" id="R-HSA-2454202">
    <property type="pathway name" value="Fc epsilon receptor (FCERI) signaling"/>
</dbReference>
<dbReference type="Reactome" id="R-HSA-2730905">
    <property type="pathway name" value="Role of LAT2/NTAL/LAB on calcium mobilization"/>
</dbReference>
<dbReference type="Reactome" id="R-HSA-2871796">
    <property type="pathway name" value="FCERI mediated MAPK activation"/>
</dbReference>
<dbReference type="Reactome" id="R-HSA-2871809">
    <property type="pathway name" value="FCERI mediated Ca+2 mobilization"/>
</dbReference>
<dbReference type="Reactome" id="R-HSA-2871837">
    <property type="pathway name" value="FCERI mediated NF-kB activation"/>
</dbReference>
<dbReference type="Reactome" id="R-HSA-5690714">
    <property type="pathway name" value="CD22 mediated BCR regulation"/>
</dbReference>
<dbReference type="Reactome" id="R-HSA-9664323">
    <property type="pathway name" value="FCGR3A-mediated IL10 synthesis"/>
</dbReference>
<dbReference type="Reactome" id="R-HSA-9664422">
    <property type="pathway name" value="FCGR3A-mediated phagocytosis"/>
</dbReference>
<dbReference type="Reactome" id="R-HSA-9679191">
    <property type="pathway name" value="Potential therapeutics for SARS"/>
</dbReference>
<dbReference type="Reactome" id="R-HSA-977606">
    <property type="pathway name" value="Regulation of Complement cascade"/>
</dbReference>
<dbReference type="Reactome" id="R-HSA-983695">
    <property type="pathway name" value="Antigen activates B Cell Receptor (BCR) leading to generation of second messengers"/>
</dbReference>
<dbReference type="ChiTaRS" id="IGLC6">
    <property type="organism name" value="human"/>
</dbReference>
<dbReference type="Pharos" id="P0CF74">
    <property type="development level" value="Tdark"/>
</dbReference>
<dbReference type="PRO" id="PR:P0CF74"/>
<dbReference type="Proteomes" id="UP000005640">
    <property type="component" value="Unplaced"/>
</dbReference>
<dbReference type="RNAct" id="P0CF74">
    <property type="molecule type" value="protein"/>
</dbReference>
<dbReference type="GO" id="GO:0005576">
    <property type="term" value="C:extracellular region"/>
    <property type="evidence" value="ECO:0000304"/>
    <property type="project" value="Reactome"/>
</dbReference>
<dbReference type="GO" id="GO:0005615">
    <property type="term" value="C:extracellular space"/>
    <property type="evidence" value="ECO:0007005"/>
    <property type="project" value="UniProtKB"/>
</dbReference>
<dbReference type="GO" id="GO:0071745">
    <property type="term" value="C:IgA immunoglobulin complex"/>
    <property type="evidence" value="ECO:0000303"/>
    <property type="project" value="ComplexPortal"/>
</dbReference>
<dbReference type="GO" id="GO:0071738">
    <property type="term" value="C:IgD immunoglobulin complex"/>
    <property type="evidence" value="ECO:0000303"/>
    <property type="project" value="ComplexPortal"/>
</dbReference>
<dbReference type="GO" id="GO:0071742">
    <property type="term" value="C:IgE immunoglobulin complex"/>
    <property type="evidence" value="ECO:0000303"/>
    <property type="project" value="ComplexPortal"/>
</dbReference>
<dbReference type="GO" id="GO:0071735">
    <property type="term" value="C:IgG immunoglobulin complex"/>
    <property type="evidence" value="ECO:0000318"/>
    <property type="project" value="GO_Central"/>
</dbReference>
<dbReference type="GO" id="GO:0071753">
    <property type="term" value="C:IgM immunoglobulin complex"/>
    <property type="evidence" value="ECO:0000303"/>
    <property type="project" value="ComplexPortal"/>
</dbReference>
<dbReference type="GO" id="GO:0005886">
    <property type="term" value="C:plasma membrane"/>
    <property type="evidence" value="ECO:0000304"/>
    <property type="project" value="Reactome"/>
</dbReference>
<dbReference type="GO" id="GO:0003823">
    <property type="term" value="F:antigen binding"/>
    <property type="evidence" value="ECO:0000318"/>
    <property type="project" value="GO_Central"/>
</dbReference>
<dbReference type="GO" id="GO:0002250">
    <property type="term" value="P:adaptive immune response"/>
    <property type="evidence" value="ECO:0000303"/>
    <property type="project" value="ComplexPortal"/>
</dbReference>
<dbReference type="GO" id="GO:0050853">
    <property type="term" value="P:B cell receptor signaling pathway"/>
    <property type="evidence" value="ECO:0000303"/>
    <property type="project" value="ComplexPortal"/>
</dbReference>
<dbReference type="GO" id="GO:0016064">
    <property type="term" value="P:immunoglobulin mediated immune response"/>
    <property type="evidence" value="ECO:0000318"/>
    <property type="project" value="GO_Central"/>
</dbReference>
<dbReference type="CDD" id="cd07699">
    <property type="entry name" value="IgC1_L"/>
    <property type="match status" value="1"/>
</dbReference>
<dbReference type="FunFam" id="2.60.40.10:FF:000283">
    <property type="entry name" value="Immunoglobulin kappa constant"/>
    <property type="match status" value="1"/>
</dbReference>
<dbReference type="Gene3D" id="2.60.40.10">
    <property type="entry name" value="Immunoglobulins"/>
    <property type="match status" value="1"/>
</dbReference>
<dbReference type="InterPro" id="IPR007110">
    <property type="entry name" value="Ig-like_dom"/>
</dbReference>
<dbReference type="InterPro" id="IPR036179">
    <property type="entry name" value="Ig-like_dom_sf"/>
</dbReference>
<dbReference type="InterPro" id="IPR013783">
    <property type="entry name" value="Ig-like_fold"/>
</dbReference>
<dbReference type="InterPro" id="IPR003006">
    <property type="entry name" value="Ig/MHC_CS"/>
</dbReference>
<dbReference type="InterPro" id="IPR003597">
    <property type="entry name" value="Ig_C1-set"/>
</dbReference>
<dbReference type="InterPro" id="IPR050160">
    <property type="entry name" value="MHC/Immunoglobulin"/>
</dbReference>
<dbReference type="PANTHER" id="PTHR19944:SF98">
    <property type="entry name" value="IG-LIKE DOMAIN-CONTAINING PROTEIN"/>
    <property type="match status" value="1"/>
</dbReference>
<dbReference type="PANTHER" id="PTHR19944">
    <property type="entry name" value="MHC CLASS II-RELATED"/>
    <property type="match status" value="1"/>
</dbReference>
<dbReference type="Pfam" id="PF07654">
    <property type="entry name" value="C1-set"/>
    <property type="match status" value="1"/>
</dbReference>
<dbReference type="SMART" id="SM00407">
    <property type="entry name" value="IGc1"/>
    <property type="match status" value="1"/>
</dbReference>
<dbReference type="SUPFAM" id="SSF48726">
    <property type="entry name" value="Immunoglobulin"/>
    <property type="match status" value="1"/>
</dbReference>
<dbReference type="PROSITE" id="PS50835">
    <property type="entry name" value="IG_LIKE"/>
    <property type="match status" value="1"/>
</dbReference>
<dbReference type="PROSITE" id="PS00290">
    <property type="entry name" value="IG_MHC"/>
    <property type="match status" value="1"/>
</dbReference>
<name>IGLC6_HUMAN</name>
<proteinExistence type="evidence at protein level"/>
<organism>
    <name type="scientific">Homo sapiens</name>
    <name type="common">Human</name>
    <dbReference type="NCBI Taxonomy" id="9606"/>
    <lineage>
        <taxon>Eukaryota</taxon>
        <taxon>Metazoa</taxon>
        <taxon>Chordata</taxon>
        <taxon>Craniata</taxon>
        <taxon>Vertebrata</taxon>
        <taxon>Euteleostomi</taxon>
        <taxon>Mammalia</taxon>
        <taxon>Eutheria</taxon>
        <taxon>Euarchontoglires</taxon>
        <taxon>Primates</taxon>
        <taxon>Haplorrhini</taxon>
        <taxon>Catarrhini</taxon>
        <taxon>Hominidae</taxon>
        <taxon>Homo</taxon>
    </lineage>
</organism>
<accession>P0CF74</accession>
<evidence type="ECO:0000255" key="1">
    <source>
        <dbReference type="PROSITE-ProRule" id="PRU00114"/>
    </source>
</evidence>
<evidence type="ECO:0000303" key="2">
    <source>
    </source>
</evidence>
<evidence type="ECO:0000303" key="3">
    <source>
    </source>
</evidence>
<evidence type="ECO:0000303" key="4">
    <source>
    </source>
</evidence>
<evidence type="ECO:0000303" key="5">
    <source>
    </source>
</evidence>
<evidence type="ECO:0000303" key="6">
    <source>
    </source>
</evidence>
<evidence type="ECO:0000303" key="7">
    <source ref="5"/>
</evidence>
<evidence type="ECO:0000305" key="8"/>
<evidence type="ECO:0000305" key="9">
    <source>
    </source>
</evidence>
<comment type="function">
    <text evidence="3 4 5">Constant region of immunoglobulin light chains. Immunoglobulins, also known as antibodies, are membrane-bound or secreted glycoproteins produced by B lymphocytes. In the recognition phase of humoral immunity, the membrane-bound immunoglobulins serve as receptors which, upon binding of a specific antigen, trigger the clonal expansion and differentiation of B lymphocytes into immunoglobulins-secreting plasma cells. Secreted immunoglobulins mediate the effector phase of humoral immunity, which results in the elimination of bound antigens (PubMed:20176268, PubMed:22158414). The antigen binding site is formed by the variable domain of one heavy chain, together with that of its associated light chain. Thus, each immunoglobulin has two antigen binding sites with remarkable affinity for a particular antigen. The variable domains are assembled by a process called V-(D)-J rearrangement and can then be subjected to somatic hypermutations which, after exposure to antigen and selection, allow affinity maturation for a particular antigen (PubMed:17576170, PubMed:20176268).</text>
</comment>
<comment type="subunit">
    <text evidence="4">Immunoglobulins are composed of two identical heavy chains and two identical light chains; disulfide-linked.</text>
</comment>
<comment type="subcellular location">
    <subcellularLocation>
        <location evidence="4 5">Secreted</location>
    </subcellularLocation>
    <subcellularLocation>
        <location evidence="4 5">Cell membrane</location>
    </subcellularLocation>
</comment>
<comment type="polymorphism">
    <text evidence="9">There are several alleles. The sequence shown is that of IMGT allele IGLC6*01 that is not represented on the reference genome assembly (GRCh38/hg38) and that is the only functional. The other existing alleles are pseudogenes. The sequence shown on the reference genome assembly (GRCh38/hg38) is that of IMGT allele IGLC6*05 that is a pseudogene due to a stop codon polymorphism at position 71.</text>
</comment>
<comment type="miscellaneous">
    <text evidence="6">Displays the following serological isotype: Mgc-, Ke+, and Oz-. Mgc- has Ala-6, Ser-8 and Thr-57; Ke+ has Gly-46 and Oz- has Arg-83.</text>
</comment>
<comment type="caution">
    <text evidence="8">For an example of a full-length immunoglobulin lambda light chain see AC P0DOX8.</text>
</comment>
<protein>
    <recommendedName>
        <fullName evidence="2 7">Immunoglobulin lambda constant 6</fullName>
    </recommendedName>
    <alternativeName>
        <fullName evidence="8">Ig lambda-6 chain C region</fullName>
    </alternativeName>
</protein>
<sequence length="106" mass="11277">GQPKAAPSVTLFPPSSEELQANKATLVCLISDFYPGAVKVAWKADGSPVNTGVETTTPSKQSNNKYAASSYLSLTPEQWKSHRSYSCQVTHEGSTVEKTVAPAECS</sequence>
<gene>
    <name evidence="2 7" type="primary">IGLC6</name>
</gene>